<gene>
    <name type="primary">trpF</name>
    <name type="ordered locus">MJ0451</name>
</gene>
<dbReference type="EC" id="5.3.1.24"/>
<dbReference type="EMBL" id="L77117">
    <property type="protein sequence ID" value="AAB98440.1"/>
    <property type="molecule type" value="Genomic_DNA"/>
</dbReference>
<dbReference type="PIR" id="C64356">
    <property type="entry name" value="C64356"/>
</dbReference>
<dbReference type="SMR" id="Q57893"/>
<dbReference type="FunCoup" id="Q57893">
    <property type="interactions" value="93"/>
</dbReference>
<dbReference type="STRING" id="243232.MJ_0451"/>
<dbReference type="PaxDb" id="243232-MJ_0451"/>
<dbReference type="EnsemblBacteria" id="AAB98440">
    <property type="protein sequence ID" value="AAB98440"/>
    <property type="gene ID" value="MJ_0451"/>
</dbReference>
<dbReference type="KEGG" id="mja:MJ_0451"/>
<dbReference type="eggNOG" id="arCOG01983">
    <property type="taxonomic scope" value="Archaea"/>
</dbReference>
<dbReference type="HOGENOM" id="CLU_076364_2_0_2"/>
<dbReference type="InParanoid" id="Q57893"/>
<dbReference type="PhylomeDB" id="Q57893"/>
<dbReference type="UniPathway" id="UPA00035">
    <property type="reaction ID" value="UER00042"/>
</dbReference>
<dbReference type="Proteomes" id="UP000000805">
    <property type="component" value="Chromosome"/>
</dbReference>
<dbReference type="GO" id="GO:0004640">
    <property type="term" value="F:phosphoribosylanthranilate isomerase activity"/>
    <property type="evidence" value="ECO:0000318"/>
    <property type="project" value="GO_Central"/>
</dbReference>
<dbReference type="GO" id="GO:0000162">
    <property type="term" value="P:L-tryptophan biosynthetic process"/>
    <property type="evidence" value="ECO:0000318"/>
    <property type="project" value="GO_Central"/>
</dbReference>
<dbReference type="CDD" id="cd00405">
    <property type="entry name" value="PRAI"/>
    <property type="match status" value="1"/>
</dbReference>
<dbReference type="FunFam" id="3.20.20.70:FF:000075">
    <property type="entry name" value="Tryptophan biosynthesis protein TRP1"/>
    <property type="match status" value="1"/>
</dbReference>
<dbReference type="Gene3D" id="3.20.20.70">
    <property type="entry name" value="Aldolase class I"/>
    <property type="match status" value="1"/>
</dbReference>
<dbReference type="HAMAP" id="MF_00135">
    <property type="entry name" value="PRAI"/>
    <property type="match status" value="1"/>
</dbReference>
<dbReference type="InterPro" id="IPR013785">
    <property type="entry name" value="Aldolase_TIM"/>
</dbReference>
<dbReference type="InterPro" id="IPR001240">
    <property type="entry name" value="PRAI_dom"/>
</dbReference>
<dbReference type="InterPro" id="IPR011060">
    <property type="entry name" value="RibuloseP-bd_barrel"/>
</dbReference>
<dbReference type="InterPro" id="IPR044643">
    <property type="entry name" value="TrpF_fam"/>
</dbReference>
<dbReference type="PANTHER" id="PTHR42894">
    <property type="entry name" value="N-(5'-PHOSPHORIBOSYL)ANTHRANILATE ISOMERASE"/>
    <property type="match status" value="1"/>
</dbReference>
<dbReference type="PANTHER" id="PTHR42894:SF1">
    <property type="entry name" value="N-(5'-PHOSPHORIBOSYL)ANTHRANILATE ISOMERASE"/>
    <property type="match status" value="1"/>
</dbReference>
<dbReference type="Pfam" id="PF00697">
    <property type="entry name" value="PRAI"/>
    <property type="match status" value="1"/>
</dbReference>
<dbReference type="SUPFAM" id="SSF51366">
    <property type="entry name" value="Ribulose-phoshate binding barrel"/>
    <property type="match status" value="1"/>
</dbReference>
<comment type="catalytic activity">
    <reaction>
        <text>N-(5-phospho-beta-D-ribosyl)anthranilate = 1-(2-carboxyphenylamino)-1-deoxy-D-ribulose 5-phosphate</text>
        <dbReference type="Rhea" id="RHEA:21540"/>
        <dbReference type="ChEBI" id="CHEBI:18277"/>
        <dbReference type="ChEBI" id="CHEBI:58613"/>
        <dbReference type="EC" id="5.3.1.24"/>
    </reaction>
</comment>
<comment type="pathway">
    <text>Amino-acid biosynthesis; L-tryptophan biosynthesis; L-tryptophan from chorismate: step 3/5.</text>
</comment>
<comment type="similarity">
    <text evidence="1">Belongs to the TrpF family.</text>
</comment>
<protein>
    <recommendedName>
        <fullName>N-(5'-phosphoribosyl)anthranilate isomerase</fullName>
        <shortName>PRAI</shortName>
        <ecNumber>5.3.1.24</ecNumber>
    </recommendedName>
</protein>
<evidence type="ECO:0000305" key="1"/>
<proteinExistence type="inferred from homology"/>
<feature type="chain" id="PRO_0000154403" description="N-(5'-phosphoribosyl)anthranilate isomerase">
    <location>
        <begin position="1"/>
        <end position="226"/>
    </location>
</feature>
<reference key="1">
    <citation type="journal article" date="1996" name="Science">
        <title>Complete genome sequence of the methanogenic archaeon, Methanococcus jannaschii.</title>
        <authorList>
            <person name="Bult C.J."/>
            <person name="White O."/>
            <person name="Olsen G.J."/>
            <person name="Zhou L."/>
            <person name="Fleischmann R.D."/>
            <person name="Sutton G.G."/>
            <person name="Blake J.A."/>
            <person name="FitzGerald L.M."/>
            <person name="Clayton R.A."/>
            <person name="Gocayne J.D."/>
            <person name="Kerlavage A.R."/>
            <person name="Dougherty B.A."/>
            <person name="Tomb J.-F."/>
            <person name="Adams M.D."/>
            <person name="Reich C.I."/>
            <person name="Overbeek R."/>
            <person name="Kirkness E.F."/>
            <person name="Weinstock K.G."/>
            <person name="Merrick J.M."/>
            <person name="Glodek A."/>
            <person name="Scott J.L."/>
            <person name="Geoghagen N.S.M."/>
            <person name="Weidman J.F."/>
            <person name="Fuhrmann J.L."/>
            <person name="Nguyen D."/>
            <person name="Utterback T.R."/>
            <person name="Kelley J.M."/>
            <person name="Peterson J.D."/>
            <person name="Sadow P.W."/>
            <person name="Hanna M.C."/>
            <person name="Cotton M.D."/>
            <person name="Roberts K.M."/>
            <person name="Hurst M.A."/>
            <person name="Kaine B.P."/>
            <person name="Borodovsky M."/>
            <person name="Klenk H.-P."/>
            <person name="Fraser C.M."/>
            <person name="Smith H.O."/>
            <person name="Woese C.R."/>
            <person name="Venter J.C."/>
        </authorList>
    </citation>
    <scope>NUCLEOTIDE SEQUENCE [LARGE SCALE GENOMIC DNA]</scope>
    <source>
        <strain>ATCC 43067 / DSM 2661 / JAL-1 / JCM 10045 / NBRC 100440</strain>
    </source>
</reference>
<organism>
    <name type="scientific">Methanocaldococcus jannaschii (strain ATCC 43067 / DSM 2661 / JAL-1 / JCM 10045 / NBRC 100440)</name>
    <name type="common">Methanococcus jannaschii</name>
    <dbReference type="NCBI Taxonomy" id="243232"/>
    <lineage>
        <taxon>Archaea</taxon>
        <taxon>Methanobacteriati</taxon>
        <taxon>Methanobacteriota</taxon>
        <taxon>Methanomada group</taxon>
        <taxon>Methanococci</taxon>
        <taxon>Methanococcales</taxon>
        <taxon>Methanocaldococcaceae</taxon>
        <taxon>Methanocaldococcus</taxon>
    </lineage>
</organism>
<accession>Q57893</accession>
<keyword id="KW-0028">Amino-acid biosynthesis</keyword>
<keyword id="KW-0057">Aromatic amino acid biosynthesis</keyword>
<keyword id="KW-0413">Isomerase</keyword>
<keyword id="KW-1185">Reference proteome</keyword>
<keyword id="KW-0822">Tryptophan biosynthesis</keyword>
<name>TRPF_METJA</name>
<sequence>MGDDLVKVKICGITNEEDIAYISKKVHAVGVIVDVPVKTPRKISLDKAIELKKYVAPFTSLVTVLMPNSIEEVLEIYNALKPNAIQLHGFESLDFVKELNKLKNTGELNAHIIKVIHIPKDEEIDFKTLLNTAKEYEKYVEAILVDTKIESIKLEGKTHNWAVSKKLRESLEKPLILAGGLNKDNVLEAIKTVKPYAIDVSSSLEAYGGKKDLKKVDEFLEVIKKV</sequence>